<name>BRKP2_PHYNA</name>
<accession>A0A088MIT0</accession>
<organism evidence="9">
    <name type="scientific">Physalaemus nattereri</name>
    <name type="common">Cuyaba dwarf frog</name>
    <name type="synonym">Eupemphix nattereri</name>
    <dbReference type="NCBI Taxonomy" id="248869"/>
    <lineage>
        <taxon>Eukaryota</taxon>
        <taxon>Metazoa</taxon>
        <taxon>Chordata</taxon>
        <taxon>Craniata</taxon>
        <taxon>Vertebrata</taxon>
        <taxon>Euteleostomi</taxon>
        <taxon>Amphibia</taxon>
        <taxon>Batrachia</taxon>
        <taxon>Anura</taxon>
        <taxon>Neobatrachia</taxon>
        <taxon>Hyloidea</taxon>
        <taxon>Leptodactylidae</taxon>
        <taxon>Leiuperinae</taxon>
        <taxon>Physalaemus</taxon>
    </lineage>
</organism>
<evidence type="ECO:0000250" key="1">
    <source>
        <dbReference type="UniProtKB" id="L0PIN3"/>
    </source>
</evidence>
<evidence type="ECO:0000250" key="2">
    <source>
        <dbReference type="UniProtKB" id="P84899"/>
    </source>
</evidence>
<evidence type="ECO:0000255" key="3"/>
<evidence type="ECO:0000256" key="4">
    <source>
        <dbReference type="SAM" id="MobiDB-lite"/>
    </source>
</evidence>
<evidence type="ECO:0000269" key="5">
    <source>
    </source>
</evidence>
<evidence type="ECO:0000303" key="6">
    <source>
    </source>
</evidence>
<evidence type="ECO:0000305" key="7"/>
<evidence type="ECO:0000305" key="8">
    <source>
    </source>
</evidence>
<evidence type="ECO:0000312" key="9">
    <source>
        <dbReference type="EMBL" id="AIN40268.1"/>
    </source>
</evidence>
<keyword id="KW-0878">Amphibian defense peptide</keyword>
<keyword id="KW-1222">Bradykinin receptor impairing toxin</keyword>
<keyword id="KW-0165">Cleavage on pair of basic residues</keyword>
<keyword id="KW-0903">Direct protein sequencing</keyword>
<keyword id="KW-1213">G-protein coupled receptor impairing toxin</keyword>
<keyword id="KW-0379">Hydroxylation</keyword>
<keyword id="KW-0964">Secreted</keyword>
<keyword id="KW-0732">Signal</keyword>
<keyword id="KW-0800">Toxin</keyword>
<protein>
    <recommendedName>
        <fullName evidence="6">Bradykinin-related peptides</fullName>
    </recommendedName>
    <component>
        <recommendedName>
            <fullName evidence="6">Nattererimorphin</fullName>
        </recommendedName>
    </component>
    <component>
        <recommendedName>
            <fullName evidence="6">[Val1,Thr6]-bradykinyl-Ser,Pro,Ala</fullName>
        </recommendedName>
    </component>
    <component>
        <recommendedName>
            <fullName evidence="6">Bradykinin</fullName>
        </recommendedName>
    </component>
    <component>
        <recommendedName>
            <fullName evidence="6">Des-Arg9-bradykinin</fullName>
        </recommendedName>
    </component>
    <component>
        <recommendedName>
            <fullName evidence="6">[Hyp3]-bradykinyl-Val,Asp</fullName>
        </recommendedName>
    </component>
</protein>
<dbReference type="EMBL" id="KJ955468">
    <property type="protein sequence ID" value="AIN40268.1"/>
    <property type="molecule type" value="mRNA"/>
</dbReference>
<dbReference type="GO" id="GO:0005576">
    <property type="term" value="C:extracellular region"/>
    <property type="evidence" value="ECO:0007669"/>
    <property type="project" value="UniProtKB-SubCell"/>
</dbReference>
<dbReference type="GO" id="GO:0090729">
    <property type="term" value="F:toxin activity"/>
    <property type="evidence" value="ECO:0007669"/>
    <property type="project" value="UniProtKB-KW"/>
</dbReference>
<dbReference type="GO" id="GO:0006952">
    <property type="term" value="P:defense response"/>
    <property type="evidence" value="ECO:0007669"/>
    <property type="project" value="UniProtKB-KW"/>
</dbReference>
<dbReference type="InterPro" id="IPR004275">
    <property type="entry name" value="Frog_antimicrobial_propeptide"/>
</dbReference>
<dbReference type="Pfam" id="PF03032">
    <property type="entry name" value="FSAP_sig_propep"/>
    <property type="match status" value="1"/>
</dbReference>
<proteinExistence type="evidence at protein level"/>
<gene>
    <name evidence="6" type="primary">BBN</name>
</gene>
<sequence>MAFLKKSLFLVLFLGVVSLSFCEEEKREEHEEEKRDEEDAESLGKRYGGLSPLRISKRVPPGFTPFRSPARSISGLTPIRLSKRVPPGFTPFRSPARRISEADPGFTPSFVVIKGLSPLRGKRRPPGFSPFRVD</sequence>
<reference evidence="9" key="1">
    <citation type="journal article" date="2015" name="Rapid Commun. Mass Spectrom.">
        <title>Skin secretion peptides: the molecular facet of the deimatic behavior of the four-eyed frog, Physalaemus nattereri (Anura, Leptodactylidae).</title>
        <authorList>
            <person name="Barbosa E.A."/>
            <person name="Iembo T."/>
            <person name="Martins G.R."/>
            <person name="Silva L.P."/>
            <person name="Prates M.V."/>
            <person name="Andrade A.C."/>
            <person name="Bloch C. Jr."/>
        </authorList>
    </citation>
    <scope>NUCLEOTIDE SEQUENCE [MRNA]</scope>
    <scope>PROTEIN SEQUENCE OF 47-56; 59-70; 85-96 AND 123-134</scope>
    <scope>SUBCELLULAR LOCATION</scope>
    <scope>MASS SPECTROMETRY</scope>
    <scope>HYDROXYLATION AT PRO-126</scope>
    <scope>IDENTIFICATION BY MASS SPECTROMETRY</scope>
    <source>
        <tissue evidence="9">Skin</tissue>
    </source>
</reference>
<feature type="signal peptide" evidence="3">
    <location>
        <begin position="1"/>
        <end position="22"/>
    </location>
</feature>
<feature type="propeptide" id="PRO_0000438948" evidence="8">
    <location>
        <begin position="23"/>
        <end position="44"/>
    </location>
</feature>
<feature type="peptide" id="PRO_0000438949" description="Nattererimorphin" evidence="5">
    <location>
        <begin position="47"/>
        <end position="56"/>
    </location>
</feature>
<feature type="peptide" id="PRO_0000438950" description="[Val1,Thr6]-bradykinyl-Ser,Pro,Ala" evidence="5">
    <location>
        <begin position="59"/>
        <end position="70"/>
    </location>
</feature>
<feature type="propeptide" id="PRO_0000438951" evidence="8">
    <location>
        <begin position="71"/>
        <end position="82"/>
    </location>
</feature>
<feature type="peptide" id="PRO_0000438952" description="[Val1,Thr6]-bradykinyl-Ser,Pro,Ala" evidence="5">
    <location>
        <begin position="85"/>
        <end position="96"/>
    </location>
</feature>
<feature type="propeptide" id="PRO_0000438953" evidence="8">
    <location>
        <begin position="99"/>
        <end position="121"/>
    </location>
</feature>
<feature type="peptide" id="PRO_0000438956" description="[Hyp3]-bradykinyl-Val,Asp" evidence="5">
    <location>
        <begin position="124"/>
        <end position="134"/>
    </location>
</feature>
<feature type="peptide" id="PRO_0000438954" description="Bradykinin" evidence="5">
    <location>
        <begin position="124"/>
        <end position="132"/>
    </location>
</feature>
<feature type="peptide" id="PRO_0000438955" description="Des-Arg9-bradykinin" evidence="5">
    <location>
        <begin position="124"/>
        <end position="131"/>
    </location>
</feature>
<feature type="region of interest" description="Disordered" evidence="4">
    <location>
        <begin position="24"/>
        <end position="71"/>
    </location>
</feature>
<feature type="compositionally biased region" description="Basic and acidic residues" evidence="4">
    <location>
        <begin position="24"/>
        <end position="33"/>
    </location>
</feature>
<feature type="modified residue" description="4-hydroxyproline; partial; in form [Hyp3]-bradykinin and [Hyp3]-bradykinin-Val,Asp" evidence="5">
    <location>
        <position position="126"/>
    </location>
</feature>
<comment type="function">
    <molecule>[Val1,Thr6]-bradykinyl-Ser,Pro,Ala</molecule>
    <text evidence="2">May produce in vitro relaxation of rat arterial smooth muscle and constriction of intestinal smooth muscle. May target bradykinin receptors (BDKRB).</text>
</comment>
<comment type="function">
    <molecule>Bradykinin</molecule>
    <text evidence="1">May produce in vitro relaxation of rat arterial smooth muscle and constriction of intestinal smooth muscle. May target bradykinin receptors (BDKRB).</text>
</comment>
<comment type="function">
    <molecule>Des-Arg9-bradykinin</molecule>
    <text evidence="1">May produce in vitro relaxation of rat arterial smooth muscle and constriction of intestinal smooth muscle. May target bradykinin receptors (BDKRB).</text>
</comment>
<comment type="function">
    <molecule>[Hyp3]-bradykinyl-Val,Asp</molecule>
    <text evidence="1">May produce in vitro relaxation of rat arterial smooth muscle and constriction of intestinal smooth muscle. May target bradykinin receptors (BDKRB).</text>
</comment>
<comment type="subcellular location">
    <subcellularLocation>
        <location evidence="5">Secreted</location>
    </subcellularLocation>
</comment>
<comment type="tissue specificity">
    <text evidence="8">Expressed by the skin glands. Expression levels in inguinal glands are much higher than in granular glands.</text>
</comment>
<comment type="mass spectrometry">
    <molecule>Nattererimorphin</molecule>
    <text>Nattererimorphin.</text>
</comment>
<comment type="mass spectrometry">
    <molecule>[Val1,Thr6]-bradykinyl-Ser,Pro,Ala</molecule>
    <text>[Val1,Thr6]-bradykinyl-Ser,Pro,Ala.</text>
</comment>
<comment type="mass spectrometry">
    <molecule>[Hyp3]-bradykinyl-Val,Asp</molecule>
    <text>Bradykinin.</text>
</comment>
<comment type="mass spectrometry">
    <molecule>Bradykinin</molecule>
    <text>[Hyp3]-bradykinin.</text>
</comment>
<comment type="mass spectrometry">
    <molecule>Des-Arg9-bradykinin</molecule>
    <text>Des-Arg9-bradykinin.</text>
</comment>
<comment type="mass spectrometry">
    <molecule>[Hyp3]-bradykinyl-Val,Asp</molecule>
    <text>[Hyp3]-bradykinyl-Val,Asp.</text>
</comment>
<comment type="similarity">
    <text evidence="7">Belongs to the frog skin active peptide (FSAP) family. Bradykinin-related peptide subfamily.</text>
</comment>